<accession>F7UI85</accession>
<proteinExistence type="evidence at protein level"/>
<reference key="1">
    <citation type="journal article" date="2013" name="PLoS ONE">
        <title>Structure, antimicrobial activities and mode of interaction with membranes of novel [corrected] phylloseptins from the painted-belly leaf frog, Phyllomedusa sauvagii.</title>
        <authorList>
            <person name="Raja Z."/>
            <person name="Andre S."/>
            <person name="Piesse C."/>
            <person name="Sereno D."/>
            <person name="Nicolas P."/>
            <person name="Foulon T."/>
            <person name="Oury B."/>
            <person name="Ladram A."/>
        </authorList>
    </citation>
    <scope>NUCLEOTIDE SEQUENCE [MRNA]</scope>
    <scope>PROTEIN SEQUENCE OF 47-65</scope>
    <scope>AMIDATION AT PHE-65</scope>
    <scope>SUBCELLULAR LOCATION</scope>
    <scope>MASS SPECTROMETRY</scope>
    <source>
        <tissue>Skin secretion</tissue>
    </source>
</reference>
<evidence type="ECO:0000255" key="1"/>
<evidence type="ECO:0000256" key="2">
    <source>
        <dbReference type="SAM" id="MobiDB-lite"/>
    </source>
</evidence>
<evidence type="ECO:0000269" key="3">
    <source>
    </source>
</evidence>
<evidence type="ECO:0000303" key="4">
    <source>
    </source>
</evidence>
<evidence type="ECO:0000305" key="5"/>
<evidence type="ECO:0000305" key="6">
    <source>
    </source>
</evidence>
<dbReference type="EMBL" id="AM903078">
    <property type="protein sequence ID" value="CAP17491.1"/>
    <property type="molecule type" value="mRNA"/>
</dbReference>
<dbReference type="GO" id="GO:0005576">
    <property type="term" value="C:extracellular region"/>
    <property type="evidence" value="ECO:0007669"/>
    <property type="project" value="UniProtKB-SubCell"/>
</dbReference>
<dbReference type="GO" id="GO:0016020">
    <property type="term" value="C:membrane"/>
    <property type="evidence" value="ECO:0007669"/>
    <property type="project" value="UniProtKB-KW"/>
</dbReference>
<dbReference type="GO" id="GO:0044218">
    <property type="term" value="C:other organism cell membrane"/>
    <property type="evidence" value="ECO:0007669"/>
    <property type="project" value="UniProtKB-KW"/>
</dbReference>
<dbReference type="GO" id="GO:0042742">
    <property type="term" value="P:defense response to bacterium"/>
    <property type="evidence" value="ECO:0007669"/>
    <property type="project" value="UniProtKB-KW"/>
</dbReference>
<dbReference type="GO" id="GO:0050832">
    <property type="term" value="P:defense response to fungus"/>
    <property type="evidence" value="ECO:0007669"/>
    <property type="project" value="UniProtKB-KW"/>
</dbReference>
<dbReference type="GO" id="GO:0045087">
    <property type="term" value="P:innate immune response"/>
    <property type="evidence" value="ECO:0007669"/>
    <property type="project" value="UniProtKB-KW"/>
</dbReference>
<dbReference type="GO" id="GO:0031640">
    <property type="term" value="P:killing of cells of another organism"/>
    <property type="evidence" value="ECO:0007669"/>
    <property type="project" value="UniProtKB-KW"/>
</dbReference>
<dbReference type="InterPro" id="IPR004275">
    <property type="entry name" value="Frog_antimicrobial_propeptide"/>
</dbReference>
<dbReference type="InterPro" id="IPR016322">
    <property type="entry name" value="FSAP"/>
</dbReference>
<dbReference type="Pfam" id="PF03032">
    <property type="entry name" value="FSAP_sig_propep"/>
    <property type="match status" value="1"/>
</dbReference>
<dbReference type="PIRSF" id="PIRSF001822">
    <property type="entry name" value="Dermaseptin_precursor"/>
    <property type="match status" value="1"/>
</dbReference>
<keyword id="KW-0027">Amidation</keyword>
<keyword id="KW-0878">Amphibian defense peptide</keyword>
<keyword id="KW-0044">Antibiotic</keyword>
<keyword id="KW-0929">Antimicrobial</keyword>
<keyword id="KW-0165">Cleavage on pair of basic residues</keyword>
<keyword id="KW-0204">Cytolysis</keyword>
<keyword id="KW-0903">Direct protein sequencing</keyword>
<keyword id="KW-0295">Fungicide</keyword>
<keyword id="KW-0354">Hemolysis</keyword>
<keyword id="KW-0391">Immunity</keyword>
<keyword id="KW-0399">Innate immunity</keyword>
<keyword id="KW-0472">Membrane</keyword>
<keyword id="KW-0964">Secreted</keyword>
<keyword id="KW-0732">Signal</keyword>
<keyword id="KW-1052">Target cell membrane</keyword>
<keyword id="KW-1053">Target membrane</keyword>
<sequence length="66" mass="7564">MAFLKKSLFLVLFLGLVSLSICEEEKRETEEEEHDQEEDDKSEEKRFLSLIPHIVSGVASLAKHFG</sequence>
<comment type="function">
    <text evidence="3">Antimicrobial peptide with high activity against Gram-positive bacteria, moderate activity against Gram-negative bacteria, and moderate activity against fungi (PubMed:23967105). Acts by causing bacterial membrane disruption inducing leakage of the intracellular content followed by cell death (PubMed:23967105). It adopts an alpha-helical amphipathic structure in membrane environments (PubMed:23967105). Also shows highly potent antiparasitic activity against Leishmania species (PubMed:23967105). Shows moderate hemolytic activity on human erythrocytes (LC(50)=25 uM) (PubMed:23967105). Is also active on human monocytes (IC(50)=22.5 uM) (PubMed:23967105).</text>
</comment>
<comment type="subcellular location">
    <subcellularLocation>
        <location evidence="3">Secreted</location>
    </subcellularLocation>
    <subcellularLocation>
        <location evidence="3">Target cell membrane</location>
    </subcellularLocation>
    <text evidence="6">Forms a helical membrane channel in the target.</text>
</comment>
<comment type="tissue specificity">
    <text evidence="6">Expressed by the skin glands.</text>
</comment>
<comment type="mass spectrometry" mass="2035.16" method="MALDI" evidence="3"/>
<comment type="similarity">
    <text evidence="5">Belongs to the frog skin active peptide (FSAP) family. Phylloseptin subfamily.</text>
</comment>
<name>PLS2_PHYSA</name>
<protein>
    <recommendedName>
        <fullName evidence="4">Phylloseptin-S2</fullName>
        <shortName evidence="4">PLS-S2</shortName>
    </recommendedName>
</protein>
<feature type="signal peptide" evidence="1">
    <location>
        <begin position="1"/>
        <end position="22"/>
    </location>
</feature>
<feature type="propeptide" id="PRO_0000449584" evidence="6">
    <location>
        <begin position="23"/>
        <end position="46"/>
    </location>
</feature>
<feature type="peptide" id="PRO_5003363005" description="Phylloseptin-S2" evidence="3">
    <location>
        <begin position="47"/>
        <end position="65"/>
    </location>
</feature>
<feature type="region of interest" description="Disordered" evidence="2">
    <location>
        <begin position="25"/>
        <end position="44"/>
    </location>
</feature>
<feature type="compositionally biased region" description="Acidic residues" evidence="2">
    <location>
        <begin position="30"/>
        <end position="41"/>
    </location>
</feature>
<feature type="modified residue" description="Phenylalanine amide" evidence="3">
    <location>
        <position position="65"/>
    </location>
</feature>
<organism>
    <name type="scientific">Phyllomedusa sauvagei</name>
    <name type="common">Sauvage's leaf frog</name>
    <dbReference type="NCBI Taxonomy" id="8395"/>
    <lineage>
        <taxon>Eukaryota</taxon>
        <taxon>Metazoa</taxon>
        <taxon>Chordata</taxon>
        <taxon>Craniata</taxon>
        <taxon>Vertebrata</taxon>
        <taxon>Euteleostomi</taxon>
        <taxon>Amphibia</taxon>
        <taxon>Batrachia</taxon>
        <taxon>Anura</taxon>
        <taxon>Neobatrachia</taxon>
        <taxon>Hyloidea</taxon>
        <taxon>Hylidae</taxon>
        <taxon>Phyllomedusinae</taxon>
        <taxon>Phyllomedusa</taxon>
    </lineage>
</organism>